<sequence>MPGSALLSLQQELRRGFEALKAAKDTFDGGHAECQELVSSLGNLAPQLKALKQVQISETPLSGFPCLQQRLHYKLSLAVDALLAKLAEKMAALQKVWDAFAQQVFTVVQLYEKNTDALDISVCVSRSAVCPSVSDMLEWLQDADRYYRLQLMQSRLLLQTLTPTDLTSMETAPNRWRSVRSARQEERIADALCQVSIFLETE</sequence>
<accession>Q8JHH5</accession>
<accession>B5DDC7</accession>
<accession>Q504J6</accession>
<protein>
    <recommendedName>
        <fullName evidence="1">AFG2-interacting ribosome maturation factor</fullName>
    </recommendedName>
    <alternativeName>
        <fullName evidence="3">Ribosome biogenesis protein C1orf109 homolog</fullName>
    </alternativeName>
</protein>
<feature type="chain" id="PRO_0000274384" description="AFG2-interacting ribosome maturation factor">
    <location>
        <begin position="1"/>
        <end position="202"/>
    </location>
</feature>
<feature type="sequence conflict" description="In Ref. 1; AAM34665." evidence="3" ref="1">
    <original>P</original>
    <variation>L</variation>
    <location>
        <position position="46"/>
    </location>
</feature>
<feature type="sequence conflict" description="In Ref. 1; AAM34665." evidence="3" ref="1">
    <original>W</original>
    <variation>R</variation>
    <location>
        <position position="97"/>
    </location>
</feature>
<feature type="sequence conflict" description="In Ref. 1; AAM34665." evidence="3" ref="1">
    <original>C</original>
    <variation>S</variation>
    <location>
        <position position="130"/>
    </location>
</feature>
<feature type="sequence conflict" description="In Ref. 1; AAM34665." evidence="3" ref="1">
    <original>D</original>
    <variation>G</variation>
    <location>
        <position position="165"/>
    </location>
</feature>
<evidence type="ECO:0000250" key="1">
    <source>
        <dbReference type="UniProtKB" id="Q9NX04"/>
    </source>
</evidence>
<evidence type="ECO:0000269" key="2">
    <source>
    </source>
</evidence>
<evidence type="ECO:0000305" key="3"/>
<gene>
    <name type="primary">airim</name>
    <name type="synonym">c19h1orf109</name>
    <name type="ORF">zgc:109790</name>
</gene>
<reference key="1">
    <citation type="journal article" date="2002" name="Nat. Genet.">
        <title>Insertional mutagenesis in zebrafish rapidly identifies genes essential for early vertebrate development.</title>
        <authorList>
            <person name="Golling G."/>
            <person name="Amsterdam A."/>
            <person name="Sun Z."/>
            <person name="Antonelli M."/>
            <person name="Maldonado E."/>
            <person name="Chen W."/>
            <person name="Burgess S."/>
            <person name="Haldi M."/>
            <person name="Artzt K."/>
            <person name="Farrington S."/>
            <person name="Lin S.-Y."/>
            <person name="Nissen R.M."/>
            <person name="Hopkins N."/>
        </authorList>
    </citation>
    <scope>NUCLEOTIDE SEQUENCE [LARGE SCALE MRNA]</scope>
    <scope>FUNCTION</scope>
    <scope>DISRUPTION PHENOTYPE</scope>
    <source>
        <tissue>Embryo</tissue>
    </source>
</reference>
<reference key="2">
    <citation type="submission" date="2008-04" db="EMBL/GenBank/DDBJ databases">
        <authorList>
            <consortium name="NIH - Zebrafish Gene Collection (ZGC) project"/>
        </authorList>
    </citation>
    <scope>NUCLEOTIDE SEQUENCE [LARGE SCALE MRNA]</scope>
    <source>
        <strain>SJD</strain>
    </source>
</reference>
<dbReference type="EMBL" id="AF506221">
    <property type="protein sequence ID" value="AAM34665.1"/>
    <property type="status" value="ALT_INIT"/>
    <property type="molecule type" value="mRNA"/>
</dbReference>
<dbReference type="EMBL" id="BC094993">
    <property type="protein sequence ID" value="AAH94993.1"/>
    <property type="molecule type" value="mRNA"/>
</dbReference>
<dbReference type="EMBL" id="BC164043">
    <property type="protein sequence ID" value="AAI64043.1"/>
    <property type="molecule type" value="mRNA"/>
</dbReference>
<dbReference type="RefSeq" id="NP_775376.1">
    <property type="nucleotide sequence ID" value="NM_173269.1"/>
</dbReference>
<dbReference type="SMR" id="Q8JHH5"/>
<dbReference type="FunCoup" id="Q8JHH5">
    <property type="interactions" value="2276"/>
</dbReference>
<dbReference type="STRING" id="7955.ENSDARP00000025246"/>
<dbReference type="PaxDb" id="7955-ENSDARP00000025246"/>
<dbReference type="DNASU" id="286778"/>
<dbReference type="GeneID" id="286778"/>
<dbReference type="KEGG" id="dre:286778"/>
<dbReference type="AGR" id="ZFIN:ZDB-GENE-021219-1"/>
<dbReference type="CTD" id="54955"/>
<dbReference type="ZFIN" id="ZDB-GENE-021219-1">
    <property type="gene designation" value="airim"/>
</dbReference>
<dbReference type="eggNOG" id="ENOG502S0VU">
    <property type="taxonomic scope" value="Eukaryota"/>
</dbReference>
<dbReference type="InParanoid" id="Q8JHH5"/>
<dbReference type="OrthoDB" id="6605214at2759"/>
<dbReference type="PhylomeDB" id="Q8JHH5"/>
<dbReference type="PRO" id="PR:Q8JHH5"/>
<dbReference type="Proteomes" id="UP000000437">
    <property type="component" value="Chromosome 19"/>
</dbReference>
<dbReference type="GO" id="GO:0005737">
    <property type="term" value="C:cytoplasm"/>
    <property type="evidence" value="ECO:0000250"/>
    <property type="project" value="UniProtKB"/>
</dbReference>
<dbReference type="GO" id="GO:0005634">
    <property type="term" value="C:nucleus"/>
    <property type="evidence" value="ECO:0000250"/>
    <property type="project" value="UniProtKB"/>
</dbReference>
<dbReference type="GO" id="GO:0042273">
    <property type="term" value="P:ribosomal large subunit biogenesis"/>
    <property type="evidence" value="ECO:0000250"/>
    <property type="project" value="UniProtKB"/>
</dbReference>
<dbReference type="InterPro" id="IPR029159">
    <property type="entry name" value="CA109-like"/>
</dbReference>
<dbReference type="PANTHER" id="PTHR16234:SF5">
    <property type="entry name" value="AFG2-INTERACTING RIBOSOME MATURATION FACTOR"/>
    <property type="match status" value="1"/>
</dbReference>
<dbReference type="PANTHER" id="PTHR16234">
    <property type="entry name" value="SIMILAR TO HYPOTHETICAL PROTEIN FLJ20508"/>
    <property type="match status" value="1"/>
</dbReference>
<dbReference type="Pfam" id="PF15011">
    <property type="entry name" value="CA109-like"/>
    <property type="match status" value="1"/>
</dbReference>
<organism>
    <name type="scientific">Danio rerio</name>
    <name type="common">Zebrafish</name>
    <name type="synonym">Brachydanio rerio</name>
    <dbReference type="NCBI Taxonomy" id="7955"/>
    <lineage>
        <taxon>Eukaryota</taxon>
        <taxon>Metazoa</taxon>
        <taxon>Chordata</taxon>
        <taxon>Craniata</taxon>
        <taxon>Vertebrata</taxon>
        <taxon>Euteleostomi</taxon>
        <taxon>Actinopterygii</taxon>
        <taxon>Neopterygii</taxon>
        <taxon>Teleostei</taxon>
        <taxon>Ostariophysi</taxon>
        <taxon>Cypriniformes</taxon>
        <taxon>Danionidae</taxon>
        <taxon>Danioninae</taxon>
        <taxon>Danio</taxon>
    </lineage>
</organism>
<name>AIRIM_DANRE</name>
<keyword id="KW-0963">Cytoplasm</keyword>
<keyword id="KW-0217">Developmental protein</keyword>
<keyword id="KW-0539">Nucleus</keyword>
<keyword id="KW-1185">Reference proteome</keyword>
<keyword id="KW-0690">Ribosome biogenesis</keyword>
<proteinExistence type="evidence at transcript level"/>
<comment type="function">
    <text evidence="1 2">Part of the 55LCC heterohexameric ATPase complex which is chromatin-associated and promotes replisome proteostasis to maintain replication fork progression and genome stability. Required for replication fork progression, sister chromatid cohesion, and chromosome stability. The ATPase activity is specifically enhanced by replication fork DNA and is coupled to cysteine protease-dependent cleavage of replisome substrates in response to replication fork damage. Uses ATPase activity to process replisome substrates in S-phase, facilitating their proteolytic turnover from chromatin to ensure DNA replication and mitotic fidelity. Involved in the cytoplasmic maturation steps of pre-60S ribosomal particles by promoting the release of shuttling protein RSL24D1/RLP24 from the pre-ribosomal particles (By similarity). Plays an essential role in early embryonic development (PubMed:12006978).</text>
</comment>
<comment type="subunit">
    <text evidence="1">Part of the 55LCC heterohexameric ATPase complex. Does not associate with pre-60S ribosomal particles.</text>
</comment>
<comment type="subcellular location">
    <subcellularLocation>
        <location evidence="1">Nucleus</location>
    </subcellularLocation>
    <subcellularLocation>
        <location evidence="1">Cytoplasm</location>
    </subcellularLocation>
</comment>
<comment type="disruption phenotype">
    <text evidence="2">Embryos show defects in branchial arch and ceratohyal development.</text>
</comment>
<comment type="sequence caution" evidence="3">
    <conflict type="erroneous initiation">
        <sequence resource="EMBL-CDS" id="AAM34665"/>
    </conflict>
    <text>Extended N-terminus.</text>
</comment>